<dbReference type="EC" id="6.2.1.47" evidence="1 2"/>
<dbReference type="EMBL" id="AY522504">
    <property type="protein sequence ID" value="AAS98774.1"/>
    <property type="molecule type" value="Genomic_DNA"/>
</dbReference>
<dbReference type="EMBL" id="CP017708">
    <property type="protein sequence ID" value="AOY83402.1"/>
    <property type="molecule type" value="Genomic_DNA"/>
</dbReference>
<dbReference type="RefSeq" id="WP_071106608.1">
    <property type="nucleotide sequence ID" value="NZ_CP017708.2"/>
</dbReference>
<dbReference type="SMR" id="Q6E7K9"/>
<dbReference type="KEGG" id="ag:AAS98774"/>
<dbReference type="BioCyc" id="MetaCyc:MONOMER-19206"/>
<dbReference type="BRENDA" id="6.2.1.47">
    <property type="organism ID" value="12270"/>
</dbReference>
<dbReference type="Proteomes" id="UP000176944">
    <property type="component" value="Chromosome"/>
</dbReference>
<dbReference type="GO" id="GO:0005886">
    <property type="term" value="C:plasma membrane"/>
    <property type="evidence" value="ECO:0007669"/>
    <property type="project" value="TreeGrafter"/>
</dbReference>
<dbReference type="GO" id="GO:0070566">
    <property type="term" value="F:adenylyltransferase activity"/>
    <property type="evidence" value="ECO:0007669"/>
    <property type="project" value="TreeGrafter"/>
</dbReference>
<dbReference type="GO" id="GO:0005524">
    <property type="term" value="F:ATP binding"/>
    <property type="evidence" value="ECO:0007669"/>
    <property type="project" value="UniProtKB-KW"/>
</dbReference>
<dbReference type="GO" id="GO:0016874">
    <property type="term" value="F:ligase activity"/>
    <property type="evidence" value="ECO:0007669"/>
    <property type="project" value="UniProtKB-KW"/>
</dbReference>
<dbReference type="GO" id="GO:0071766">
    <property type="term" value="P:Actinobacterium-type cell wall biogenesis"/>
    <property type="evidence" value="ECO:0007669"/>
    <property type="project" value="UniProtKB-ARBA"/>
</dbReference>
<dbReference type="GO" id="GO:0006633">
    <property type="term" value="P:fatty acid biosynthetic process"/>
    <property type="evidence" value="ECO:0007669"/>
    <property type="project" value="TreeGrafter"/>
</dbReference>
<dbReference type="CDD" id="cd05931">
    <property type="entry name" value="FAAL"/>
    <property type="match status" value="1"/>
</dbReference>
<dbReference type="FunFam" id="3.40.50.12780:FF:000013">
    <property type="entry name" value="Long-chain-fatty-acid--AMP ligase FadD32"/>
    <property type="match status" value="1"/>
</dbReference>
<dbReference type="Gene3D" id="3.30.300.30">
    <property type="match status" value="1"/>
</dbReference>
<dbReference type="Gene3D" id="3.40.50.12780">
    <property type="entry name" value="N-terminal domain of ligase-like"/>
    <property type="match status" value="1"/>
</dbReference>
<dbReference type="InterPro" id="IPR025110">
    <property type="entry name" value="AMP-bd_C"/>
</dbReference>
<dbReference type="InterPro" id="IPR045851">
    <property type="entry name" value="AMP-bd_C_sf"/>
</dbReference>
<dbReference type="InterPro" id="IPR020845">
    <property type="entry name" value="AMP-binding_CS"/>
</dbReference>
<dbReference type="InterPro" id="IPR000873">
    <property type="entry name" value="AMP-dep_synth/lig_dom"/>
</dbReference>
<dbReference type="InterPro" id="IPR042099">
    <property type="entry name" value="ANL_N_sf"/>
</dbReference>
<dbReference type="InterPro" id="IPR040097">
    <property type="entry name" value="FAAL/FAAC"/>
</dbReference>
<dbReference type="PANTHER" id="PTHR22754:SF32">
    <property type="entry name" value="DISCO-INTERACTING PROTEIN 2"/>
    <property type="match status" value="1"/>
</dbReference>
<dbReference type="PANTHER" id="PTHR22754">
    <property type="entry name" value="DISCO-INTERACTING PROTEIN 2 DIP2 -RELATED"/>
    <property type="match status" value="1"/>
</dbReference>
<dbReference type="Pfam" id="PF00501">
    <property type="entry name" value="AMP-binding"/>
    <property type="match status" value="1"/>
</dbReference>
<dbReference type="Pfam" id="PF23024">
    <property type="entry name" value="AMP-dom_DIP2-like"/>
    <property type="match status" value="1"/>
</dbReference>
<dbReference type="SUPFAM" id="SSF56801">
    <property type="entry name" value="Acetyl-CoA synthetase-like"/>
    <property type="match status" value="1"/>
</dbReference>
<dbReference type="PROSITE" id="PS00455">
    <property type="entry name" value="AMP_BINDING"/>
    <property type="match status" value="1"/>
</dbReference>
<feature type="chain" id="PRO_0000459825" description="Medium-chain-fatty-acid--[acyl-carrier-protein] ligase JamA">
    <location>
        <begin position="1"/>
        <end position="592"/>
    </location>
</feature>
<comment type="function">
    <text evidence="1 2">Ligase involved in the biosynthesis of jamaicamides, which show sodium channel blocking activity and fish toxicity (PubMed:15217615, PubMed:25531891). Initiates jamaicamide biosynthesis by the activation of the starter unit, 5-hexenoic acid, followed by the loading of the activated 5-hexenoic acid onto the acyl carrier protein JamC (PubMed:15217615, PubMed:25531891). In vitro, can also use 5-hexynoic acid, heptanoic acid, butanoic acid, hexanoic acid and benzoic acid (PubMed:15217615).</text>
</comment>
<comment type="catalytic activity">
    <reaction evidence="1 2">
        <text>a medium-chain fatty acid + holo-[ACP] + ATP = a medium-chain fatty acyl-[ACP] + AMP + diphosphate</text>
        <dbReference type="Rhea" id="RHEA:50460"/>
        <dbReference type="Rhea" id="RHEA-COMP:9685"/>
        <dbReference type="Rhea" id="RHEA-COMP:12681"/>
        <dbReference type="ChEBI" id="CHEBI:30616"/>
        <dbReference type="ChEBI" id="CHEBI:33019"/>
        <dbReference type="ChEBI" id="CHEBI:59558"/>
        <dbReference type="ChEBI" id="CHEBI:64479"/>
        <dbReference type="ChEBI" id="CHEBI:133242"/>
        <dbReference type="ChEBI" id="CHEBI:456215"/>
        <dbReference type="EC" id="6.2.1.47"/>
    </reaction>
    <physiologicalReaction direction="left-to-right" evidence="1 2">
        <dbReference type="Rhea" id="RHEA:50461"/>
    </physiologicalReaction>
</comment>
<comment type="catalytic activity">
    <reaction evidence="5">
        <text>a medium-chain fatty acid + ATP + H(+) = a medium-chain fatty acyl-AMP + diphosphate</text>
        <dbReference type="Rhea" id="RHEA:56920"/>
        <dbReference type="ChEBI" id="CHEBI:15378"/>
        <dbReference type="ChEBI" id="CHEBI:30616"/>
        <dbReference type="ChEBI" id="CHEBI:33019"/>
        <dbReference type="ChEBI" id="CHEBI:59558"/>
        <dbReference type="ChEBI" id="CHEBI:141140"/>
    </reaction>
    <physiologicalReaction direction="left-to-right" evidence="5">
        <dbReference type="Rhea" id="RHEA:56921"/>
    </physiologicalReaction>
</comment>
<comment type="catalytic activity">
    <reaction evidence="5">
        <text>a medium-chain fatty acyl-AMP + holo-[ACP] = a medium-chain fatty acyl-[ACP] + AMP + H(+)</text>
        <dbReference type="Rhea" id="RHEA:63636"/>
        <dbReference type="Rhea" id="RHEA-COMP:9685"/>
        <dbReference type="Rhea" id="RHEA-COMP:12681"/>
        <dbReference type="ChEBI" id="CHEBI:15378"/>
        <dbReference type="ChEBI" id="CHEBI:64479"/>
        <dbReference type="ChEBI" id="CHEBI:133242"/>
        <dbReference type="ChEBI" id="CHEBI:141140"/>
        <dbReference type="ChEBI" id="CHEBI:456215"/>
    </reaction>
    <physiologicalReaction direction="left-to-right" evidence="5">
        <dbReference type="Rhea" id="RHEA:63637"/>
    </physiologicalReaction>
</comment>
<comment type="induction">
    <text evidence="1">Part of the jamaicamide (jam) biosynthetic gene cluster, encoding enzymes catalyzing most or all of jamaicamide biosynthesis.</text>
</comment>
<comment type="similarity">
    <text evidence="4">Belongs to the ATP-dependent AMP-binding enzyme family.</text>
</comment>
<evidence type="ECO:0000269" key="1">
    <source>
    </source>
</evidence>
<evidence type="ECO:0000269" key="2">
    <source>
    </source>
</evidence>
<evidence type="ECO:0000303" key="3">
    <source>
    </source>
</evidence>
<evidence type="ECO:0000305" key="4"/>
<evidence type="ECO:0000305" key="5">
    <source>
    </source>
</evidence>
<evidence type="ECO:0000312" key="6">
    <source>
        <dbReference type="EMBL" id="AOY83402.1"/>
    </source>
</evidence>
<proteinExistence type="evidence at protein level"/>
<organism>
    <name type="scientific">Moorena producens (strain JHB)</name>
    <dbReference type="NCBI Taxonomy" id="1454205"/>
    <lineage>
        <taxon>Bacteria</taxon>
        <taxon>Bacillati</taxon>
        <taxon>Cyanobacteriota</taxon>
        <taxon>Cyanophyceae</taxon>
        <taxon>Oscillatoriophycideae</taxon>
        <taxon>Oscillatoriales</taxon>
        <taxon>Oscillatoriaceae</taxon>
        <taxon>Moorena</taxon>
    </lineage>
</organism>
<keyword id="KW-0067">ATP-binding</keyword>
<keyword id="KW-0276">Fatty acid metabolism</keyword>
<keyword id="KW-0436">Ligase</keyword>
<keyword id="KW-0443">Lipid metabolism</keyword>
<keyword id="KW-0547">Nucleotide-binding</keyword>
<protein>
    <recommendedName>
        <fullName evidence="4">Medium-chain-fatty-acid--[acyl-carrier-protein] ligase JamA</fullName>
        <ecNumber evidence="1 2">6.2.1.47</ecNumber>
    </recommendedName>
    <alternativeName>
        <fullName evidence="4">Jamaicamide biosynthesis protein A</fullName>
    </alternativeName>
</protein>
<sequence length="592" mass="66467">MSKPEFSTLIDLLQYRSHYQSARKAYSFLQNGEKEVNSLSYKELDEKARAIAVELQKQVDRNERALLLYPQGLEFIAALFGCLYAGVVAIPAPPPDPIRLKRTLPRLEAILFDAQASVILTDFSKYSQLKESTSELSSEFKRIKWIVSDKIPTALSQKWQKPDINSDTLAYLQYTSGSTSTPKGVMLTHKNLIHHCSYIKEAWGYTSDSIATTWVPHFHDYGLVDGLIQPLYSGIPCYVMSPIAFYMRPIRWLQTISRYRVTHSQGPNFAYEHCLRRTTAEQRANLDLSSWRTASNGAEPVRQETVENFIATFEPFGFRRDALYPAYGLAEATLLVSTKKHGEKARVLTLAAEALEKNRIVVVSPAEKEQVVRFVVSCGPPIGGMKVAIVNPFTLRKCQPDQVGEIWVCDPSMAVGYWNRLEETKKTFHANLAESGEGPFMRTGDLGFLKDGELFITGRIKDVIIIRGRNHYPQDIELTVEKSHPSLRSSHGAALAVEIKGEERLIVVQEVERSYQKTLDINEVVGNIREAVTDEHDLQVYSVVLIKAGSIPKTSSGKIQRSACRVKFLEGTLDQWEARVKVTSKSGAAVSS</sequence>
<name>JAMA_MOOP1</name>
<accession>Q6E7K9</accession>
<accession>A0A1D9G6X8</accession>
<reference key="1">
    <citation type="journal article" date="2004" name="Chem. Biol.">
        <title>Structure and biosynthesis of the jamaicamides, new mixed polyketide-peptide neurotoxins from the marine cyanobacterium Lyngbya majuscula.</title>
        <authorList>
            <person name="Edwards D.J."/>
            <person name="Marquez B.L."/>
            <person name="Nogle L.M."/>
            <person name="McPhail K."/>
            <person name="Goeger D.E."/>
            <person name="Roberts M.A."/>
            <person name="Gerwick W.H."/>
        </authorList>
    </citation>
    <scope>NUCLEOTIDE SEQUENCE [GENOMIC DNA]</scope>
    <scope>FUNCTION</scope>
    <scope>CATALYTIC ACTIVITY</scope>
    <scope>GENE CLUSTER</scope>
    <source>
        <strain>JHB</strain>
    </source>
</reference>
<reference key="2">
    <citation type="journal article" date="2017" name="Proc. Natl. Acad. Sci. U.S.A.">
        <title>Comparative genomics uncovers the prolific and distinctive metabolic potential of the cyanobacterial genus Moorea.</title>
        <authorList>
            <person name="Leao T."/>
            <person name="Castelao G."/>
            <person name="Korobeynikov A."/>
            <person name="Monroe E.A."/>
            <person name="Podell S."/>
            <person name="Glukhov E."/>
            <person name="Allen E.E."/>
            <person name="Gerwick W.H."/>
            <person name="Gerwick L."/>
        </authorList>
    </citation>
    <scope>NUCLEOTIDE SEQUENCE [LARGE SCALE GENOMIC DNA]</scope>
    <source>
        <strain>JHB</strain>
    </source>
</reference>
<reference key="3">
    <citation type="journal article" date="2015" name="Nat. Chem. Biol.">
        <title>De novo biosynthesis of terminal alkyne-labeled natural products.</title>
        <authorList>
            <person name="Zhu X."/>
            <person name="Liu J."/>
            <person name="Zhang W."/>
        </authorList>
    </citation>
    <scope>FUNCTION</scope>
    <scope>CATALYTIC ACTIVITY</scope>
</reference>
<gene>
    <name evidence="3" type="primary">jamA</name>
    <name evidence="6" type="ORF">BJP36_29300</name>
</gene>